<accession>Q7Z6K4</accession>
<accession>B8A4K5</accession>
<dbReference type="EMBL" id="BX255925">
    <property type="status" value="NOT_ANNOTATED_CDS"/>
    <property type="molecule type" value="Genomic_DNA"/>
</dbReference>
<dbReference type="EMBL" id="BC053618">
    <property type="protein sequence ID" value="AAH53618.1"/>
    <property type="molecule type" value="mRNA"/>
</dbReference>
<dbReference type="CCDS" id="CCDS35188.1"/>
<dbReference type="RefSeq" id="NP_001004354.1">
    <property type="nucleotide sequence ID" value="NM_001004354.3"/>
</dbReference>
<dbReference type="PDB" id="6PY8">
    <property type="method" value="X-ray"/>
    <property type="resolution" value="3.75 A"/>
    <property type="chains" value="B/G=1-114"/>
</dbReference>
<dbReference type="PDBsum" id="6PY8"/>
<dbReference type="SMR" id="Q7Z6K4"/>
<dbReference type="BioGRID" id="137507">
    <property type="interactions" value="3"/>
</dbReference>
<dbReference type="FunCoup" id="Q7Z6K4">
    <property type="interactions" value="7"/>
</dbReference>
<dbReference type="IntAct" id="Q7Z6K4">
    <property type="interactions" value="2"/>
</dbReference>
<dbReference type="STRING" id="9606.ENSP00000349041"/>
<dbReference type="GlyCosmos" id="Q7Z6K4">
    <property type="glycosylation" value="1 site, 1 glycan"/>
</dbReference>
<dbReference type="GlyGen" id="Q7Z6K4">
    <property type="glycosylation" value="1 site, 1 O-linked glycan (1 site)"/>
</dbReference>
<dbReference type="iPTMnet" id="Q7Z6K4"/>
<dbReference type="PhosphoSitePlus" id="Q7Z6K4"/>
<dbReference type="BioMuta" id="NRARP"/>
<dbReference type="DMDM" id="74750170"/>
<dbReference type="PaxDb" id="9606-ENSP00000349041"/>
<dbReference type="PeptideAtlas" id="Q7Z6K4"/>
<dbReference type="Antibodypedia" id="19006">
    <property type="antibodies" value="149 antibodies from 26 providers"/>
</dbReference>
<dbReference type="DNASU" id="441478"/>
<dbReference type="Ensembl" id="ENST00000356628.4">
    <property type="protein sequence ID" value="ENSP00000349041.2"/>
    <property type="gene ID" value="ENSG00000198435.4"/>
</dbReference>
<dbReference type="GeneID" id="441478"/>
<dbReference type="KEGG" id="hsa:441478"/>
<dbReference type="MANE-Select" id="ENST00000356628.4">
    <property type="protein sequence ID" value="ENSP00000349041.2"/>
    <property type="RefSeq nucleotide sequence ID" value="NM_001004354.3"/>
    <property type="RefSeq protein sequence ID" value="NP_001004354.1"/>
</dbReference>
<dbReference type="UCSC" id="uc004cmo.3">
    <property type="organism name" value="human"/>
</dbReference>
<dbReference type="AGR" id="HGNC:33843"/>
<dbReference type="CTD" id="441478"/>
<dbReference type="DisGeNET" id="441478"/>
<dbReference type="GeneCards" id="NRARP"/>
<dbReference type="HGNC" id="HGNC:33843">
    <property type="gene designation" value="NRARP"/>
</dbReference>
<dbReference type="HPA" id="ENSG00000198435">
    <property type="expression patterns" value="Tissue enhanced (intestine)"/>
</dbReference>
<dbReference type="MIM" id="619987">
    <property type="type" value="gene"/>
</dbReference>
<dbReference type="neXtProt" id="NX_Q7Z6K4"/>
<dbReference type="OpenTargets" id="ENSG00000198435"/>
<dbReference type="PharmGKB" id="PA164724205"/>
<dbReference type="VEuPathDB" id="HostDB:ENSG00000198435"/>
<dbReference type="eggNOG" id="KOG0505">
    <property type="taxonomic scope" value="Eukaryota"/>
</dbReference>
<dbReference type="GeneTree" id="ENSGT00940000161928"/>
<dbReference type="HOGENOM" id="CLU_000134_41_1_1"/>
<dbReference type="InParanoid" id="Q7Z6K4"/>
<dbReference type="OMA" id="MRTETAH"/>
<dbReference type="OrthoDB" id="5314041at2759"/>
<dbReference type="PAN-GO" id="Q7Z6K4">
    <property type="GO annotations" value="5 GO annotations based on evolutionary models"/>
</dbReference>
<dbReference type="PhylomeDB" id="Q7Z6K4"/>
<dbReference type="PathwayCommons" id="Q7Z6K4"/>
<dbReference type="SignaLink" id="Q7Z6K4"/>
<dbReference type="SIGNOR" id="Q7Z6K4"/>
<dbReference type="BioGRID-ORCS" id="441478">
    <property type="hits" value="19 hits in 1150 CRISPR screens"/>
</dbReference>
<dbReference type="ChiTaRS" id="NRARP">
    <property type="organism name" value="human"/>
</dbReference>
<dbReference type="GenomeRNAi" id="441478"/>
<dbReference type="Pharos" id="Q7Z6K4">
    <property type="development level" value="Tbio"/>
</dbReference>
<dbReference type="PRO" id="PR:Q7Z6K4"/>
<dbReference type="Proteomes" id="UP000005640">
    <property type="component" value="Chromosome 9"/>
</dbReference>
<dbReference type="RNAct" id="Q7Z6K4">
    <property type="molecule type" value="protein"/>
</dbReference>
<dbReference type="Bgee" id="ENSG00000198435">
    <property type="expression patterns" value="Expressed in mucosa of sigmoid colon and 178 other cell types or tissues"/>
</dbReference>
<dbReference type="GO" id="GO:0030941">
    <property type="term" value="F:chloroplast targeting sequence binding"/>
    <property type="evidence" value="ECO:0000318"/>
    <property type="project" value="GO_Central"/>
</dbReference>
<dbReference type="GO" id="GO:0002043">
    <property type="term" value="P:blood vessel endothelial cell proliferation involved in sprouting angiogenesis"/>
    <property type="evidence" value="ECO:0000318"/>
    <property type="project" value="GO_Central"/>
</dbReference>
<dbReference type="GO" id="GO:0001569">
    <property type="term" value="P:branching involved in blood vessel morphogenesis"/>
    <property type="evidence" value="ECO:0000318"/>
    <property type="project" value="GO_Central"/>
</dbReference>
<dbReference type="GO" id="GO:0045746">
    <property type="term" value="P:negative regulation of Notch signaling pathway"/>
    <property type="evidence" value="ECO:0000315"/>
    <property type="project" value="MGI"/>
</dbReference>
<dbReference type="GO" id="GO:0045581">
    <property type="term" value="P:negative regulation of T cell differentiation"/>
    <property type="evidence" value="ECO:0007669"/>
    <property type="project" value="Ensembl"/>
</dbReference>
<dbReference type="GO" id="GO:0000122">
    <property type="term" value="P:negative regulation of transcription by RNA polymerase II"/>
    <property type="evidence" value="ECO:0007669"/>
    <property type="project" value="Ensembl"/>
</dbReference>
<dbReference type="GO" id="GO:0007219">
    <property type="term" value="P:Notch signaling pathway"/>
    <property type="evidence" value="ECO:0000314"/>
    <property type="project" value="UniProtKB"/>
</dbReference>
<dbReference type="GO" id="GO:0090263">
    <property type="term" value="P:positive regulation of canonical Wnt signaling pathway"/>
    <property type="evidence" value="ECO:0000315"/>
    <property type="project" value="MGI"/>
</dbReference>
<dbReference type="GO" id="GO:0001938">
    <property type="term" value="P:positive regulation of endothelial cell proliferation"/>
    <property type="evidence" value="ECO:0000318"/>
    <property type="project" value="GO_Central"/>
</dbReference>
<dbReference type="GO" id="GO:1905564">
    <property type="term" value="P:positive regulation of vascular endothelial cell proliferation"/>
    <property type="evidence" value="ECO:0007669"/>
    <property type="project" value="Ensembl"/>
</dbReference>
<dbReference type="GO" id="GO:0045036">
    <property type="term" value="P:protein targeting to chloroplast"/>
    <property type="evidence" value="ECO:0000318"/>
    <property type="project" value="GO_Central"/>
</dbReference>
<dbReference type="GO" id="GO:0032525">
    <property type="term" value="P:somite rostral/caudal axis specification"/>
    <property type="evidence" value="ECO:0007669"/>
    <property type="project" value="Ensembl"/>
</dbReference>
<dbReference type="GO" id="GO:0030217">
    <property type="term" value="P:T cell differentiation"/>
    <property type="evidence" value="ECO:0007669"/>
    <property type="project" value="Ensembl"/>
</dbReference>
<dbReference type="GO" id="GO:0101023">
    <property type="term" value="P:vascular endothelial cell proliferation"/>
    <property type="evidence" value="ECO:0007669"/>
    <property type="project" value="Ensembl"/>
</dbReference>
<dbReference type="FunFam" id="1.25.40.20:FF:000085">
    <property type="entry name" value="Notch-regulated ankyrin repeat-containing protein A"/>
    <property type="match status" value="1"/>
</dbReference>
<dbReference type="Gene3D" id="1.25.40.20">
    <property type="entry name" value="Ankyrin repeat-containing domain"/>
    <property type="match status" value="1"/>
</dbReference>
<dbReference type="InterPro" id="IPR002110">
    <property type="entry name" value="Ankyrin_rpt"/>
</dbReference>
<dbReference type="InterPro" id="IPR036770">
    <property type="entry name" value="Ankyrin_rpt-contain_sf"/>
</dbReference>
<dbReference type="InterPro" id="IPR051226">
    <property type="entry name" value="PP1_Regulatory_Subunit"/>
</dbReference>
<dbReference type="PANTHER" id="PTHR24179:SF21">
    <property type="entry name" value="MYOSIN BINDING SUBUNIT, ISOFORM O"/>
    <property type="match status" value="1"/>
</dbReference>
<dbReference type="PANTHER" id="PTHR24179">
    <property type="entry name" value="PROTEIN PHOSPHATASE 1 REGULATORY SUBUNIT 12"/>
    <property type="match status" value="1"/>
</dbReference>
<dbReference type="Pfam" id="PF12796">
    <property type="entry name" value="Ank_2"/>
    <property type="match status" value="1"/>
</dbReference>
<dbReference type="SMART" id="SM00248">
    <property type="entry name" value="ANK"/>
    <property type="match status" value="2"/>
</dbReference>
<dbReference type="SUPFAM" id="SSF48403">
    <property type="entry name" value="Ankyrin repeat"/>
    <property type="match status" value="1"/>
</dbReference>
<dbReference type="PROSITE" id="PS50297">
    <property type="entry name" value="ANK_REP_REGION"/>
    <property type="match status" value="1"/>
</dbReference>
<dbReference type="PROSITE" id="PS50088">
    <property type="entry name" value="ANK_REPEAT"/>
    <property type="match status" value="2"/>
</dbReference>
<gene>
    <name type="primary">NRARP</name>
</gene>
<name>NRARP_HUMAN</name>
<feature type="chain" id="PRO_0000325079" description="Notch-regulated ankyrin repeat-containing protein">
    <location>
        <begin position="1"/>
        <end position="114"/>
    </location>
</feature>
<feature type="repeat" description="ANK 1">
    <location>
        <begin position="50"/>
        <end position="79"/>
    </location>
</feature>
<feature type="repeat" description="ANK 2">
    <location>
        <begin position="83"/>
        <end position="112"/>
    </location>
</feature>
<comment type="function">
    <text evidence="1 2 3 5">Downstream effector of Notch signaling. Involved in the regulation of liver cancer cells self-renewal (PubMed:25985737). Involved in angiogenesis acting downstream of Notch at branch points to regulate vascular density. Proposed to integrate endothelial Notch and Wnt signaling to control stalk cell proliferation and to stablilize new endothelial connections during angiogenesis (PubMed:19154719). During somitogenesis involved in maintenance of proper somite segmentation and proper numbers of somites and vertebrae. Required for proper anterior-posterior somite patterning. Proposed to function in a negative feedback loop to destabilize Notch 1 intracellular domain (NICD) and down-regulate the Notch signal, preventing expansion of the Notch signal into the anterior somite domain (By similarity).</text>
</comment>
<comment type="subunit">
    <text evidence="1">Interacts with LEF1.</text>
</comment>
<comment type="interaction">
    <interactant intactId="EBI-5773228">
        <id>Q7Z6K4</id>
    </interactant>
    <interactant intactId="EBI-5462215">
        <id>P29083</id>
        <label>GTF2E1</label>
    </interactant>
    <organismsDiffer>false</organismsDiffer>
    <experiments>3</experiments>
</comment>
<comment type="induction">
    <text evidence="2">In endothelial cells by Notch signaling.</text>
</comment>
<comment type="similarity">
    <text evidence="4">Belongs to the NRARP family.</text>
</comment>
<proteinExistence type="evidence at protein level"/>
<protein>
    <recommendedName>
        <fullName>Notch-regulated ankyrin repeat-containing protein</fullName>
    </recommendedName>
</protein>
<organism>
    <name type="scientific">Homo sapiens</name>
    <name type="common">Human</name>
    <dbReference type="NCBI Taxonomy" id="9606"/>
    <lineage>
        <taxon>Eukaryota</taxon>
        <taxon>Metazoa</taxon>
        <taxon>Chordata</taxon>
        <taxon>Craniata</taxon>
        <taxon>Vertebrata</taxon>
        <taxon>Euteleostomi</taxon>
        <taxon>Mammalia</taxon>
        <taxon>Eutheria</taxon>
        <taxon>Euarchontoglires</taxon>
        <taxon>Primates</taxon>
        <taxon>Haplorrhini</taxon>
        <taxon>Catarrhini</taxon>
        <taxon>Hominidae</taxon>
        <taxon>Homo</taxon>
    </lineage>
</organism>
<evidence type="ECO:0000250" key="1">
    <source>
        <dbReference type="UniProtKB" id="Q91ZA8"/>
    </source>
</evidence>
<evidence type="ECO:0000269" key="2">
    <source>
    </source>
</evidence>
<evidence type="ECO:0000269" key="3">
    <source>
    </source>
</evidence>
<evidence type="ECO:0000305" key="4"/>
<evidence type="ECO:0000305" key="5">
    <source>
    </source>
</evidence>
<reference key="1">
    <citation type="journal article" date="2004" name="Nature">
        <title>DNA sequence and analysis of human chromosome 9.</title>
        <authorList>
            <person name="Humphray S.J."/>
            <person name="Oliver K."/>
            <person name="Hunt A.R."/>
            <person name="Plumb R.W."/>
            <person name="Loveland J.E."/>
            <person name="Howe K.L."/>
            <person name="Andrews T.D."/>
            <person name="Searle S."/>
            <person name="Hunt S.E."/>
            <person name="Scott C.E."/>
            <person name="Jones M.C."/>
            <person name="Ainscough R."/>
            <person name="Almeida J.P."/>
            <person name="Ambrose K.D."/>
            <person name="Ashwell R.I.S."/>
            <person name="Babbage A.K."/>
            <person name="Babbage S."/>
            <person name="Bagguley C.L."/>
            <person name="Bailey J."/>
            <person name="Banerjee R."/>
            <person name="Barker D.J."/>
            <person name="Barlow K.F."/>
            <person name="Bates K."/>
            <person name="Beasley H."/>
            <person name="Beasley O."/>
            <person name="Bird C.P."/>
            <person name="Bray-Allen S."/>
            <person name="Brown A.J."/>
            <person name="Brown J.Y."/>
            <person name="Burford D."/>
            <person name="Burrill W."/>
            <person name="Burton J."/>
            <person name="Carder C."/>
            <person name="Carter N.P."/>
            <person name="Chapman J.C."/>
            <person name="Chen Y."/>
            <person name="Clarke G."/>
            <person name="Clark S.Y."/>
            <person name="Clee C.M."/>
            <person name="Clegg S."/>
            <person name="Collier R.E."/>
            <person name="Corby N."/>
            <person name="Crosier M."/>
            <person name="Cummings A.T."/>
            <person name="Davies J."/>
            <person name="Dhami P."/>
            <person name="Dunn M."/>
            <person name="Dutta I."/>
            <person name="Dyer L.W."/>
            <person name="Earthrowl M.E."/>
            <person name="Faulkner L."/>
            <person name="Fleming C.J."/>
            <person name="Frankish A."/>
            <person name="Frankland J.A."/>
            <person name="French L."/>
            <person name="Fricker D.G."/>
            <person name="Garner P."/>
            <person name="Garnett J."/>
            <person name="Ghori J."/>
            <person name="Gilbert J.G.R."/>
            <person name="Glison C."/>
            <person name="Grafham D.V."/>
            <person name="Gribble S."/>
            <person name="Griffiths C."/>
            <person name="Griffiths-Jones S."/>
            <person name="Grocock R."/>
            <person name="Guy J."/>
            <person name="Hall R.E."/>
            <person name="Hammond S."/>
            <person name="Harley J.L."/>
            <person name="Harrison E.S.I."/>
            <person name="Hart E.A."/>
            <person name="Heath P.D."/>
            <person name="Henderson C.D."/>
            <person name="Hopkins B.L."/>
            <person name="Howard P.J."/>
            <person name="Howden P.J."/>
            <person name="Huckle E."/>
            <person name="Johnson C."/>
            <person name="Johnson D."/>
            <person name="Joy A.A."/>
            <person name="Kay M."/>
            <person name="Keenan S."/>
            <person name="Kershaw J.K."/>
            <person name="Kimberley A.M."/>
            <person name="King A."/>
            <person name="Knights A."/>
            <person name="Laird G.K."/>
            <person name="Langford C."/>
            <person name="Lawlor S."/>
            <person name="Leongamornlert D.A."/>
            <person name="Leversha M."/>
            <person name="Lloyd C."/>
            <person name="Lloyd D.M."/>
            <person name="Lovell J."/>
            <person name="Martin S."/>
            <person name="Mashreghi-Mohammadi M."/>
            <person name="Matthews L."/>
            <person name="McLaren S."/>
            <person name="McLay K.E."/>
            <person name="McMurray A."/>
            <person name="Milne S."/>
            <person name="Nickerson T."/>
            <person name="Nisbett J."/>
            <person name="Nordsiek G."/>
            <person name="Pearce A.V."/>
            <person name="Peck A.I."/>
            <person name="Porter K.M."/>
            <person name="Pandian R."/>
            <person name="Pelan S."/>
            <person name="Phillimore B."/>
            <person name="Povey S."/>
            <person name="Ramsey Y."/>
            <person name="Rand V."/>
            <person name="Scharfe M."/>
            <person name="Sehra H.K."/>
            <person name="Shownkeen R."/>
            <person name="Sims S.K."/>
            <person name="Skuce C.D."/>
            <person name="Smith M."/>
            <person name="Steward C.A."/>
            <person name="Swarbreck D."/>
            <person name="Sycamore N."/>
            <person name="Tester J."/>
            <person name="Thorpe A."/>
            <person name="Tracey A."/>
            <person name="Tromans A."/>
            <person name="Thomas D.W."/>
            <person name="Wall M."/>
            <person name="Wallis J.M."/>
            <person name="West A.P."/>
            <person name="Whitehead S.L."/>
            <person name="Willey D.L."/>
            <person name="Williams S.A."/>
            <person name="Wilming L."/>
            <person name="Wray P.W."/>
            <person name="Young L."/>
            <person name="Ashurst J.L."/>
            <person name="Coulson A."/>
            <person name="Blocker H."/>
            <person name="Durbin R.M."/>
            <person name="Sulston J.E."/>
            <person name="Hubbard T."/>
            <person name="Jackson M.J."/>
            <person name="Bentley D.R."/>
            <person name="Beck S."/>
            <person name="Rogers J."/>
            <person name="Dunham I."/>
        </authorList>
    </citation>
    <scope>NUCLEOTIDE SEQUENCE [LARGE SCALE GENOMIC DNA]</scope>
</reference>
<reference key="2">
    <citation type="journal article" date="2004" name="Genome Res.">
        <title>The status, quality, and expansion of the NIH full-length cDNA project: the Mammalian Gene Collection (MGC).</title>
        <authorList>
            <consortium name="The MGC Project Team"/>
        </authorList>
    </citation>
    <scope>NUCLEOTIDE SEQUENCE [LARGE SCALE MRNA]</scope>
    <source>
        <tissue>Eye</tissue>
    </source>
</reference>
<reference key="3">
    <citation type="journal article" date="2009" name="Dev. Cell">
        <title>Nrarp coordinates endothelial Notch and Wnt signaling to control vessel density in angiogenesis.</title>
        <authorList>
            <person name="Phng L.K."/>
            <person name="Potente M."/>
            <person name="Leslie J.D."/>
            <person name="Babbage J."/>
            <person name="Nyqvist D."/>
            <person name="Lobov I."/>
            <person name="Ondr J.K."/>
            <person name="Rao S."/>
            <person name="Lang R.A."/>
            <person name="Thurston G."/>
            <person name="Gerhardt H."/>
        </authorList>
    </citation>
    <scope>FUNCTION</scope>
    <scope>INDUCTION</scope>
</reference>
<reference key="4">
    <citation type="journal article" date="2015" name="Nat. Commun.">
        <title>C8orf4 negatively regulates self-renewal of liver cancer stem cells via suppression of NOTCH2 signalling.</title>
        <authorList>
            <person name="Zhu P."/>
            <person name="Wang Y."/>
            <person name="Du Y."/>
            <person name="He L."/>
            <person name="Huang G."/>
            <person name="Zhang G."/>
            <person name="Yan X."/>
            <person name="Fan Z."/>
        </authorList>
    </citation>
    <scope>FUNCTION</scope>
</reference>
<keyword id="KW-0002">3D-structure</keyword>
<keyword id="KW-0040">ANK repeat</keyword>
<keyword id="KW-0217">Developmental protein</keyword>
<keyword id="KW-1267">Proteomics identification</keyword>
<keyword id="KW-1185">Reference proteome</keyword>
<keyword id="KW-0677">Repeat</keyword>
<sequence>MSQAELSTCSAPQTQRIFQEAVRKGNTQELQSLLQNMTNCEFNVNSFGPEGQTALHQSVIDGNLELVKLLVKFGADIRLANRDGWSALHIAAFGGHQDIVLYLITKAKYAASGR</sequence>